<feature type="chain" id="PRO_0000356765" description="Large ribosomal subunit protein bL33">
    <location>
        <begin position="1"/>
        <end position="49"/>
    </location>
</feature>
<comment type="similarity">
    <text evidence="1">Belongs to the bacterial ribosomal protein bL33 family.</text>
</comment>
<name>RL33_PSELT</name>
<gene>
    <name evidence="1" type="primary">rpmG</name>
    <name type="ordered locus">Tlet_0470</name>
</gene>
<reference key="1">
    <citation type="submission" date="2007-08" db="EMBL/GenBank/DDBJ databases">
        <title>Complete sequence of Thermotoga lettingae TMO.</title>
        <authorList>
            <consortium name="US DOE Joint Genome Institute"/>
            <person name="Copeland A."/>
            <person name="Lucas S."/>
            <person name="Lapidus A."/>
            <person name="Barry K."/>
            <person name="Glavina del Rio T."/>
            <person name="Dalin E."/>
            <person name="Tice H."/>
            <person name="Pitluck S."/>
            <person name="Foster B."/>
            <person name="Bruce D."/>
            <person name="Schmutz J."/>
            <person name="Larimer F."/>
            <person name="Land M."/>
            <person name="Hauser L."/>
            <person name="Kyrpides N."/>
            <person name="Mikhailova N."/>
            <person name="Nelson K."/>
            <person name="Gogarten J.P."/>
            <person name="Noll K."/>
            <person name="Richardson P."/>
        </authorList>
    </citation>
    <scope>NUCLEOTIDE SEQUENCE [LARGE SCALE GENOMIC DNA]</scope>
    <source>
        <strain>ATCC BAA-301 / DSM 14385 / NBRC 107922 / TMO</strain>
    </source>
</reference>
<sequence length="49" mass="5825">MRVKISLKCSECGKKNYYTDKNKTAKEKLSFRRYCPKCNKHTVHSETKL</sequence>
<proteinExistence type="inferred from homology"/>
<protein>
    <recommendedName>
        <fullName evidence="1">Large ribosomal subunit protein bL33</fullName>
    </recommendedName>
    <alternativeName>
        <fullName evidence="2">50S ribosomal protein L33</fullName>
    </alternativeName>
</protein>
<keyword id="KW-1185">Reference proteome</keyword>
<keyword id="KW-0687">Ribonucleoprotein</keyword>
<keyword id="KW-0689">Ribosomal protein</keyword>
<accession>A8F4F3</accession>
<organism>
    <name type="scientific">Pseudothermotoga lettingae (strain ATCC BAA-301 / DSM 14385 / NBRC 107922 / TMO)</name>
    <name type="common">Thermotoga lettingae</name>
    <dbReference type="NCBI Taxonomy" id="416591"/>
    <lineage>
        <taxon>Bacteria</taxon>
        <taxon>Thermotogati</taxon>
        <taxon>Thermotogota</taxon>
        <taxon>Thermotogae</taxon>
        <taxon>Thermotogales</taxon>
        <taxon>Thermotogaceae</taxon>
        <taxon>Pseudothermotoga</taxon>
    </lineage>
</organism>
<evidence type="ECO:0000255" key="1">
    <source>
        <dbReference type="HAMAP-Rule" id="MF_00294"/>
    </source>
</evidence>
<evidence type="ECO:0000305" key="2"/>
<dbReference type="EMBL" id="CP000812">
    <property type="protein sequence ID" value="ABV33037.1"/>
    <property type="molecule type" value="Genomic_DNA"/>
</dbReference>
<dbReference type="SMR" id="A8F4F3"/>
<dbReference type="STRING" id="416591.Tlet_0470"/>
<dbReference type="KEGG" id="tle:Tlet_0470"/>
<dbReference type="eggNOG" id="COG0267">
    <property type="taxonomic scope" value="Bacteria"/>
</dbReference>
<dbReference type="HOGENOM" id="CLU_190949_0_2_0"/>
<dbReference type="OrthoDB" id="9801333at2"/>
<dbReference type="Proteomes" id="UP000002016">
    <property type="component" value="Chromosome"/>
</dbReference>
<dbReference type="GO" id="GO:0005737">
    <property type="term" value="C:cytoplasm"/>
    <property type="evidence" value="ECO:0007669"/>
    <property type="project" value="UniProtKB-ARBA"/>
</dbReference>
<dbReference type="GO" id="GO:1990904">
    <property type="term" value="C:ribonucleoprotein complex"/>
    <property type="evidence" value="ECO:0007669"/>
    <property type="project" value="UniProtKB-KW"/>
</dbReference>
<dbReference type="GO" id="GO:0005840">
    <property type="term" value="C:ribosome"/>
    <property type="evidence" value="ECO:0007669"/>
    <property type="project" value="UniProtKB-KW"/>
</dbReference>
<dbReference type="GO" id="GO:0003735">
    <property type="term" value="F:structural constituent of ribosome"/>
    <property type="evidence" value="ECO:0007669"/>
    <property type="project" value="InterPro"/>
</dbReference>
<dbReference type="GO" id="GO:0006412">
    <property type="term" value="P:translation"/>
    <property type="evidence" value="ECO:0007669"/>
    <property type="project" value="UniProtKB-UniRule"/>
</dbReference>
<dbReference type="Gene3D" id="2.20.28.120">
    <property type="entry name" value="Ribosomal protein L33"/>
    <property type="match status" value="1"/>
</dbReference>
<dbReference type="HAMAP" id="MF_00294">
    <property type="entry name" value="Ribosomal_bL33"/>
    <property type="match status" value="1"/>
</dbReference>
<dbReference type="InterPro" id="IPR001705">
    <property type="entry name" value="Ribosomal_bL33"/>
</dbReference>
<dbReference type="InterPro" id="IPR038584">
    <property type="entry name" value="Ribosomal_bL33_sf"/>
</dbReference>
<dbReference type="InterPro" id="IPR011332">
    <property type="entry name" value="Ribosomal_zn-bd"/>
</dbReference>
<dbReference type="NCBIfam" id="NF001764">
    <property type="entry name" value="PRK00504.1"/>
    <property type="match status" value="1"/>
</dbReference>
<dbReference type="NCBIfam" id="NF001860">
    <property type="entry name" value="PRK00595.1"/>
    <property type="match status" value="1"/>
</dbReference>
<dbReference type="NCBIfam" id="TIGR01023">
    <property type="entry name" value="rpmG_bact"/>
    <property type="match status" value="1"/>
</dbReference>
<dbReference type="PANTHER" id="PTHR43168">
    <property type="entry name" value="50S RIBOSOMAL PROTEIN L33, CHLOROPLASTIC"/>
    <property type="match status" value="1"/>
</dbReference>
<dbReference type="PANTHER" id="PTHR43168:SF6">
    <property type="entry name" value="LARGE RIBOSOMAL SUBUNIT PROTEIN BL33A"/>
    <property type="match status" value="1"/>
</dbReference>
<dbReference type="Pfam" id="PF00471">
    <property type="entry name" value="Ribosomal_L33"/>
    <property type="match status" value="1"/>
</dbReference>
<dbReference type="SUPFAM" id="SSF57829">
    <property type="entry name" value="Zn-binding ribosomal proteins"/>
    <property type="match status" value="1"/>
</dbReference>